<reference key="1">
    <citation type="submission" date="2007-05" db="EMBL/GenBank/DDBJ databases">
        <title>Complete sequence of Geobacter uraniireducens Rf4.</title>
        <authorList>
            <consortium name="US DOE Joint Genome Institute"/>
            <person name="Copeland A."/>
            <person name="Lucas S."/>
            <person name="Lapidus A."/>
            <person name="Barry K."/>
            <person name="Detter J.C."/>
            <person name="Glavina del Rio T."/>
            <person name="Hammon N."/>
            <person name="Israni S."/>
            <person name="Dalin E."/>
            <person name="Tice H."/>
            <person name="Pitluck S."/>
            <person name="Chertkov O."/>
            <person name="Brettin T."/>
            <person name="Bruce D."/>
            <person name="Han C."/>
            <person name="Schmutz J."/>
            <person name="Larimer F."/>
            <person name="Land M."/>
            <person name="Hauser L."/>
            <person name="Kyrpides N."/>
            <person name="Mikhailova N."/>
            <person name="Shelobolina E."/>
            <person name="Aklujkar M."/>
            <person name="Lovley D."/>
            <person name="Richardson P."/>
        </authorList>
    </citation>
    <scope>NUCLEOTIDE SEQUENCE [LARGE SCALE GENOMIC DNA]</scope>
    <source>
        <strain>ATCC BAA-1134 / JCM 13001 / Rf4</strain>
    </source>
</reference>
<comment type="function">
    <text evidence="1">NDH-1 shuttles electrons from NADH, via FMN and iron-sulfur (Fe-S) centers, to quinones in the respiratory chain. The immediate electron acceptor for the enzyme in this species is believed to be ubiquinone. Couples the redox reaction to proton translocation (for every two electrons transferred, four hydrogen ions are translocated across the cytoplasmic membrane), and thus conserves the redox energy in a proton gradient.</text>
</comment>
<comment type="catalytic activity">
    <reaction evidence="1">
        <text>a quinone + NADH + 5 H(+)(in) = a quinol + NAD(+) + 4 H(+)(out)</text>
        <dbReference type="Rhea" id="RHEA:57888"/>
        <dbReference type="ChEBI" id="CHEBI:15378"/>
        <dbReference type="ChEBI" id="CHEBI:24646"/>
        <dbReference type="ChEBI" id="CHEBI:57540"/>
        <dbReference type="ChEBI" id="CHEBI:57945"/>
        <dbReference type="ChEBI" id="CHEBI:132124"/>
    </reaction>
</comment>
<comment type="subunit">
    <text evidence="1">NDH-1 is composed of 14 different subunits. Subunits NuoA, H, J, K, L, M, N constitute the membrane sector of the complex.</text>
</comment>
<comment type="subcellular location">
    <subcellularLocation>
        <location evidence="1">Cell inner membrane</location>
        <topology evidence="1">Multi-pass membrane protein</topology>
    </subcellularLocation>
</comment>
<comment type="similarity">
    <text evidence="1">Belongs to the complex I subunit 3 family.</text>
</comment>
<sequence length="145" mass="16120">MSMSTPQKAILPPFNADILPLGLYVAATVLLIGILLLAAWWLGDKKRSAAKEIAYESGVIPTGTARLAYPVPFYLVAIFFIVFDVEAVFIFTWAVAWDELGFPGLIHITAFIIVLLLGLVWLWLKGGLEWGPSKQVRRSKFEVRS</sequence>
<organism>
    <name type="scientific">Geotalea uraniireducens (strain Rf4)</name>
    <name type="common">Geobacter uraniireducens</name>
    <dbReference type="NCBI Taxonomy" id="351605"/>
    <lineage>
        <taxon>Bacteria</taxon>
        <taxon>Pseudomonadati</taxon>
        <taxon>Thermodesulfobacteriota</taxon>
        <taxon>Desulfuromonadia</taxon>
        <taxon>Geobacterales</taxon>
        <taxon>Geobacteraceae</taxon>
        <taxon>Geotalea</taxon>
    </lineage>
</organism>
<accession>A5GCZ5</accession>
<proteinExistence type="inferred from homology"/>
<feature type="chain" id="PRO_0000362695" description="NADH-quinone oxidoreductase subunit A 1">
    <location>
        <begin position="1"/>
        <end position="145"/>
    </location>
</feature>
<feature type="transmembrane region" description="Helical" evidence="1">
    <location>
        <begin position="18"/>
        <end position="38"/>
    </location>
</feature>
<feature type="transmembrane region" description="Helical" evidence="1">
    <location>
        <begin position="71"/>
        <end position="91"/>
    </location>
</feature>
<feature type="transmembrane region" description="Helical" evidence="1">
    <location>
        <begin position="104"/>
        <end position="124"/>
    </location>
</feature>
<name>NUOA1_GEOUR</name>
<gene>
    <name evidence="1" type="primary">nuoA1</name>
    <name type="ordered locus">Gura_0334</name>
</gene>
<keyword id="KW-0997">Cell inner membrane</keyword>
<keyword id="KW-1003">Cell membrane</keyword>
<keyword id="KW-0472">Membrane</keyword>
<keyword id="KW-0520">NAD</keyword>
<keyword id="KW-0874">Quinone</keyword>
<keyword id="KW-1185">Reference proteome</keyword>
<keyword id="KW-1278">Translocase</keyword>
<keyword id="KW-0812">Transmembrane</keyword>
<keyword id="KW-1133">Transmembrane helix</keyword>
<keyword id="KW-0813">Transport</keyword>
<keyword id="KW-0830">Ubiquinone</keyword>
<evidence type="ECO:0000255" key="1">
    <source>
        <dbReference type="HAMAP-Rule" id="MF_01394"/>
    </source>
</evidence>
<protein>
    <recommendedName>
        <fullName evidence="1">NADH-quinone oxidoreductase subunit A 1</fullName>
        <ecNumber evidence="1">7.1.1.-</ecNumber>
    </recommendedName>
    <alternativeName>
        <fullName evidence="1">NADH dehydrogenase I subunit A 1</fullName>
    </alternativeName>
    <alternativeName>
        <fullName evidence="1">NDH-1 subunit A 1</fullName>
    </alternativeName>
    <alternativeName>
        <fullName evidence="1">NUO1 1</fullName>
    </alternativeName>
</protein>
<dbReference type="EC" id="7.1.1.-" evidence="1"/>
<dbReference type="EMBL" id="CP000698">
    <property type="protein sequence ID" value="ABQ24550.1"/>
    <property type="molecule type" value="Genomic_DNA"/>
</dbReference>
<dbReference type="RefSeq" id="WP_011937276.1">
    <property type="nucleotide sequence ID" value="NC_009483.1"/>
</dbReference>
<dbReference type="SMR" id="A5GCZ5"/>
<dbReference type="STRING" id="351605.Gura_0334"/>
<dbReference type="KEGG" id="gur:Gura_0334"/>
<dbReference type="HOGENOM" id="CLU_119549_2_0_7"/>
<dbReference type="OrthoDB" id="9791970at2"/>
<dbReference type="Proteomes" id="UP000006695">
    <property type="component" value="Chromosome"/>
</dbReference>
<dbReference type="GO" id="GO:0030964">
    <property type="term" value="C:NADH dehydrogenase complex"/>
    <property type="evidence" value="ECO:0007669"/>
    <property type="project" value="TreeGrafter"/>
</dbReference>
<dbReference type="GO" id="GO:0005886">
    <property type="term" value="C:plasma membrane"/>
    <property type="evidence" value="ECO:0007669"/>
    <property type="project" value="UniProtKB-SubCell"/>
</dbReference>
<dbReference type="GO" id="GO:0008137">
    <property type="term" value="F:NADH dehydrogenase (ubiquinone) activity"/>
    <property type="evidence" value="ECO:0007669"/>
    <property type="project" value="InterPro"/>
</dbReference>
<dbReference type="GO" id="GO:0050136">
    <property type="term" value="F:NADH:ubiquinone reductase (non-electrogenic) activity"/>
    <property type="evidence" value="ECO:0007669"/>
    <property type="project" value="UniProtKB-UniRule"/>
</dbReference>
<dbReference type="GO" id="GO:0048038">
    <property type="term" value="F:quinone binding"/>
    <property type="evidence" value="ECO:0007669"/>
    <property type="project" value="UniProtKB-KW"/>
</dbReference>
<dbReference type="Gene3D" id="1.20.58.1610">
    <property type="entry name" value="NADH:ubiquinone/plastoquinone oxidoreductase, chain 3"/>
    <property type="match status" value="1"/>
</dbReference>
<dbReference type="HAMAP" id="MF_01394">
    <property type="entry name" value="NDH1_NuoA"/>
    <property type="match status" value="1"/>
</dbReference>
<dbReference type="InterPro" id="IPR023043">
    <property type="entry name" value="NAD(P)H_OxRDtase_bac/plastid"/>
</dbReference>
<dbReference type="InterPro" id="IPR000440">
    <property type="entry name" value="NADH_UbQ/plastoQ_OxRdtase_su3"/>
</dbReference>
<dbReference type="InterPro" id="IPR038430">
    <property type="entry name" value="NDAH_ubi_oxred_su3_sf"/>
</dbReference>
<dbReference type="PANTHER" id="PTHR11058:SF21">
    <property type="entry name" value="NADH-QUINONE OXIDOREDUCTASE SUBUNIT A"/>
    <property type="match status" value="1"/>
</dbReference>
<dbReference type="PANTHER" id="PTHR11058">
    <property type="entry name" value="NADH-UBIQUINONE OXIDOREDUCTASE CHAIN 3"/>
    <property type="match status" value="1"/>
</dbReference>
<dbReference type="Pfam" id="PF00507">
    <property type="entry name" value="Oxidored_q4"/>
    <property type="match status" value="1"/>
</dbReference>